<name>ZDH19_HUMAN</name>
<comment type="function">
    <text evidence="5 7">Palmitoyltransferase that mediates palmitoylation oproteins, such as RRAS and SQSTM1 (PubMed:20074548, PubMed:37802024). Catalyzes palmitoylation of RRAS, leading to increased cell viability (PubMed:20074548). Acts as a positive regulator of autophagy by mediating palmitoylation of SQSTM1, promoting affinity between SQSTM1 and ATG8 proteins and recruitment of ubiquitinated cargo proteins to autophagosomes (PubMed:37802024).</text>
</comment>
<comment type="function">
    <text evidence="6">(Microbial infection) Promotes Chikungunya virus (CHIKV) replication by mediating viral nsp1 palmitoylation.</text>
</comment>
<comment type="catalytic activity">
    <reaction evidence="5 7">
        <text>L-cysteinyl-[protein] + hexadecanoyl-CoA = S-hexadecanoyl-L-cysteinyl-[protein] + CoA</text>
        <dbReference type="Rhea" id="RHEA:36683"/>
        <dbReference type="Rhea" id="RHEA-COMP:10131"/>
        <dbReference type="Rhea" id="RHEA-COMP:11032"/>
        <dbReference type="ChEBI" id="CHEBI:29950"/>
        <dbReference type="ChEBI" id="CHEBI:57287"/>
        <dbReference type="ChEBI" id="CHEBI:57379"/>
        <dbReference type="ChEBI" id="CHEBI:74151"/>
        <dbReference type="EC" id="2.3.1.225"/>
    </reaction>
    <physiologicalReaction direction="left-to-right" evidence="5 7">
        <dbReference type="Rhea" id="RHEA:36684"/>
    </physiologicalReaction>
</comment>
<comment type="interaction">
    <interactant intactId="EBI-25961277">
        <id>Q8WVZ1-3</id>
    </interactant>
    <interactant intactId="EBI-466029">
        <id>P42858</id>
        <label>HTT</label>
    </interactant>
    <organismsDiffer>false</organismsDiffer>
    <experiments>3</experiments>
</comment>
<comment type="subcellular location">
    <subcellularLocation>
        <location evidence="5 11">Golgi apparatus membrane</location>
        <topology evidence="2">Multi-pass membrane protein</topology>
    </subcellularLocation>
    <subcellularLocation>
        <location evidence="5">Cytoplasm</location>
        <location evidence="5">Perinuclear region</location>
    </subcellularLocation>
</comment>
<comment type="alternative products">
    <event type="alternative splicing"/>
    <isoform>
        <id>Q8WVZ1-1</id>
        <name>1</name>
        <sequence type="displayed"/>
    </isoform>
    <isoform>
        <id>Q8WVZ1-2</id>
        <name>2</name>
        <sequence type="described" ref="VSP_056001"/>
    </isoform>
    <isoform>
        <id>Q8WVZ1-3</id>
        <name>3</name>
        <sequence type="described" ref="VSP_060410 VSP_060411"/>
    </isoform>
</comment>
<comment type="domain">
    <text evidence="1">The DHHC domain is required for palmitoyltransferase activity.</text>
</comment>
<comment type="similarity">
    <text evidence="11">Belongs to the DHHC palmitoyltransferase family.</text>
</comment>
<comment type="caution">
    <text evidence="12 13">Was shown to mediate palmitoylation of STAT3, leading to homodimerization and transcriptional activation of STAT3. However, this study was later retracted.</text>
</comment>
<dbReference type="EC" id="2.3.1.225" evidence="5 7"/>
<dbReference type="EMBL" id="AK122907">
    <property type="protein sequence ID" value="BAG53793.1"/>
    <property type="molecule type" value="mRNA"/>
</dbReference>
<dbReference type="EMBL" id="AC069257">
    <property type="status" value="NOT_ANNOTATED_CDS"/>
    <property type="molecule type" value="Genomic_DNA"/>
</dbReference>
<dbReference type="EMBL" id="CH471191">
    <property type="protein sequence ID" value="EAW53668.1"/>
    <property type="molecule type" value="Genomic_DNA"/>
</dbReference>
<dbReference type="EMBL" id="CH471191">
    <property type="protein sequence ID" value="EAW53669.1"/>
    <property type="molecule type" value="Genomic_DNA"/>
</dbReference>
<dbReference type="CCDS" id="CCDS43190.1">
    <molecule id="Q8WVZ1-1"/>
</dbReference>
<dbReference type="RefSeq" id="NP_001034706.1">
    <molecule id="Q8WVZ1-1"/>
    <property type="nucleotide sequence ID" value="NM_001039617.2"/>
</dbReference>
<dbReference type="SMR" id="Q8WVZ1"/>
<dbReference type="BioGRID" id="126283">
    <property type="interactions" value="49"/>
</dbReference>
<dbReference type="FunCoup" id="Q8WVZ1">
    <property type="interactions" value="58"/>
</dbReference>
<dbReference type="IntAct" id="Q8WVZ1">
    <property type="interactions" value="43"/>
</dbReference>
<dbReference type="STRING" id="9606.ENSP00000296326"/>
<dbReference type="GlyGen" id="Q8WVZ1">
    <property type="glycosylation" value="1 site"/>
</dbReference>
<dbReference type="PhosphoSitePlus" id="Q8WVZ1"/>
<dbReference type="SwissPalm" id="Q8WVZ1"/>
<dbReference type="BioMuta" id="ZDHHC19"/>
<dbReference type="DMDM" id="218511970"/>
<dbReference type="MassIVE" id="Q8WVZ1"/>
<dbReference type="PaxDb" id="9606-ENSP00000296326"/>
<dbReference type="PeptideAtlas" id="Q8WVZ1"/>
<dbReference type="ProteomicsDB" id="3758"/>
<dbReference type="ProteomicsDB" id="74836">
    <molecule id="Q8WVZ1-1"/>
</dbReference>
<dbReference type="Antibodypedia" id="33933">
    <property type="antibodies" value="56 antibodies from 11 providers"/>
</dbReference>
<dbReference type="DNASU" id="131540"/>
<dbReference type="Ensembl" id="ENST00000296326.8">
    <molecule id="Q8WVZ1-1"/>
    <property type="protein sequence ID" value="ENSP00000296326.3"/>
    <property type="gene ID" value="ENSG00000163958.14"/>
</dbReference>
<dbReference type="Ensembl" id="ENST00000397544.6">
    <molecule id="Q8WVZ1-3"/>
    <property type="protein sequence ID" value="ENSP00000380678.2"/>
    <property type="gene ID" value="ENSG00000163958.14"/>
</dbReference>
<dbReference type="Ensembl" id="ENST00000438232.5">
    <molecule id="Q8WVZ1-2"/>
    <property type="protein sequence ID" value="ENSP00000393710.1"/>
    <property type="gene ID" value="ENSG00000163958.14"/>
</dbReference>
<dbReference type="GeneID" id="131540"/>
<dbReference type="KEGG" id="hsa:131540"/>
<dbReference type="MANE-Select" id="ENST00000296326.8">
    <property type="protein sequence ID" value="ENSP00000296326.3"/>
    <property type="RefSeq nucleotide sequence ID" value="NM_001039617.2"/>
    <property type="RefSeq protein sequence ID" value="NP_001034706.1"/>
</dbReference>
<dbReference type="UCSC" id="uc003fwc.4">
    <molecule id="Q8WVZ1-1"/>
    <property type="organism name" value="human"/>
</dbReference>
<dbReference type="AGR" id="HGNC:20713"/>
<dbReference type="CTD" id="131540"/>
<dbReference type="DisGeNET" id="131540"/>
<dbReference type="GeneCards" id="ZDHHC19"/>
<dbReference type="HGNC" id="HGNC:20713">
    <property type="gene designation" value="ZDHHC19"/>
</dbReference>
<dbReference type="HPA" id="ENSG00000163958">
    <property type="expression patterns" value="Tissue enriched (testis)"/>
</dbReference>
<dbReference type="MIM" id="618671">
    <property type="type" value="gene"/>
</dbReference>
<dbReference type="neXtProt" id="NX_Q8WVZ1"/>
<dbReference type="OpenTargets" id="ENSG00000163958"/>
<dbReference type="PharmGKB" id="PA134871748"/>
<dbReference type="VEuPathDB" id="HostDB:ENSG00000163958"/>
<dbReference type="eggNOG" id="KOG1311">
    <property type="taxonomic scope" value="Eukaryota"/>
</dbReference>
<dbReference type="GeneTree" id="ENSGT00940000161784"/>
<dbReference type="HOGENOM" id="CLU_018741_4_0_1"/>
<dbReference type="InParanoid" id="Q8WVZ1"/>
<dbReference type="OMA" id="NVCVEDF"/>
<dbReference type="OrthoDB" id="4096362at2759"/>
<dbReference type="PAN-GO" id="Q8WVZ1">
    <property type="GO annotations" value="5 GO annotations based on evolutionary models"/>
</dbReference>
<dbReference type="PhylomeDB" id="Q8WVZ1"/>
<dbReference type="TreeFam" id="TF319798"/>
<dbReference type="PathwayCommons" id="Q8WVZ1"/>
<dbReference type="SignaLink" id="Q8WVZ1"/>
<dbReference type="BioGRID-ORCS" id="131540">
    <property type="hits" value="15 hits in 1158 CRISPR screens"/>
</dbReference>
<dbReference type="GenomeRNAi" id="131540"/>
<dbReference type="Pharos" id="Q8WVZ1">
    <property type="development level" value="Tdark"/>
</dbReference>
<dbReference type="PRO" id="PR:Q8WVZ1"/>
<dbReference type="Proteomes" id="UP000005640">
    <property type="component" value="Chromosome 3"/>
</dbReference>
<dbReference type="RNAct" id="Q8WVZ1">
    <property type="molecule type" value="protein"/>
</dbReference>
<dbReference type="Bgee" id="ENSG00000163958">
    <property type="expression patterns" value="Expressed in right testis and 114 other cell types or tissues"/>
</dbReference>
<dbReference type="GO" id="GO:0005783">
    <property type="term" value="C:endoplasmic reticulum"/>
    <property type="evidence" value="ECO:0000314"/>
    <property type="project" value="UniProtKB"/>
</dbReference>
<dbReference type="GO" id="GO:0005794">
    <property type="term" value="C:Golgi apparatus"/>
    <property type="evidence" value="ECO:0000318"/>
    <property type="project" value="GO_Central"/>
</dbReference>
<dbReference type="GO" id="GO:0000139">
    <property type="term" value="C:Golgi membrane"/>
    <property type="evidence" value="ECO:0000314"/>
    <property type="project" value="UniProtKB"/>
</dbReference>
<dbReference type="GO" id="GO:0048471">
    <property type="term" value="C:perinuclear region of cytoplasm"/>
    <property type="evidence" value="ECO:0007669"/>
    <property type="project" value="UniProtKB-SubCell"/>
</dbReference>
<dbReference type="GO" id="GO:0097356">
    <property type="term" value="C:perinucleolar compartment"/>
    <property type="evidence" value="ECO:0000314"/>
    <property type="project" value="UniProtKB"/>
</dbReference>
<dbReference type="GO" id="GO:0019706">
    <property type="term" value="F:protein-cysteine S-palmitoyltransferase activity"/>
    <property type="evidence" value="ECO:0000314"/>
    <property type="project" value="UniProtKB"/>
</dbReference>
<dbReference type="GO" id="GO:0018230">
    <property type="term" value="P:peptidyl-L-cysteine S-palmitoylation"/>
    <property type="evidence" value="ECO:0000314"/>
    <property type="project" value="UniProtKB"/>
</dbReference>
<dbReference type="GO" id="GO:1905337">
    <property type="term" value="P:positive regulation of aggrephagy"/>
    <property type="evidence" value="ECO:0000314"/>
    <property type="project" value="UniProt"/>
</dbReference>
<dbReference type="GO" id="GO:0006612">
    <property type="term" value="P:protein targeting to membrane"/>
    <property type="evidence" value="ECO:0000318"/>
    <property type="project" value="GO_Central"/>
</dbReference>
<dbReference type="InterPro" id="IPR001594">
    <property type="entry name" value="Palmitoyltrfase_DHHC"/>
</dbReference>
<dbReference type="InterPro" id="IPR039859">
    <property type="entry name" value="PFA4/ZDH16/20/ERF2-like"/>
</dbReference>
<dbReference type="PANTHER" id="PTHR22883:SF326">
    <property type="entry name" value="PALMITOYLTRANSFERASE ZDHHC19"/>
    <property type="match status" value="1"/>
</dbReference>
<dbReference type="PANTHER" id="PTHR22883">
    <property type="entry name" value="ZINC FINGER DHHC DOMAIN CONTAINING PROTEIN"/>
    <property type="match status" value="1"/>
</dbReference>
<dbReference type="Pfam" id="PF01529">
    <property type="entry name" value="DHHC"/>
    <property type="match status" value="1"/>
</dbReference>
<dbReference type="PROSITE" id="PS50216">
    <property type="entry name" value="DHHC"/>
    <property type="match status" value="1"/>
</dbReference>
<sequence>MTLLTDATPLVKEPHPLPLVPRPWFLPSLFAAFNVVLLVFFSGLFFAFPCRWLAQNGEWAFPVITGSLFVLTFFSLVSLNFSDPGILHQGSAEQGPLTVHVVWVNHGAFRLQWCPKCCFHRPPRTYHCPWCNICVEDFDHHCKWVNNCIGHRNFRFFMLLVLSLCLYSGAMLVTCLIFLVRTTHLPFSTDKAIAIVVAVSAAGLLVPLSLLLLIQALSVSSADRTYKGKCRHLQGYNPFDQGCASNWYLTICAPLGPKYMAEAVQLQRVVGPDWTSMPNLHPPMSPSALNPPAPTSGSLQSREGTPGAW</sequence>
<keyword id="KW-0012">Acyltransferase</keyword>
<keyword id="KW-0025">Alternative splicing</keyword>
<keyword id="KW-0963">Cytoplasm</keyword>
<keyword id="KW-0333">Golgi apparatus</keyword>
<keyword id="KW-0472">Membrane</keyword>
<keyword id="KW-1267">Proteomics identification</keyword>
<keyword id="KW-1185">Reference proteome</keyword>
<keyword id="KW-0808">Transferase</keyword>
<keyword id="KW-0812">Transmembrane</keyword>
<keyword id="KW-1133">Transmembrane helix</keyword>
<accession>Q8WVZ1</accession>
<accession>A0A0B4J1W2</accession>
<accession>A8MSY6</accession>
<accession>B3KVI1</accession>
<evidence type="ECO:0000250" key="1">
    <source>
        <dbReference type="UniProtKB" id="Q8IUH5"/>
    </source>
</evidence>
<evidence type="ECO:0000255" key="2"/>
<evidence type="ECO:0000255" key="3">
    <source>
        <dbReference type="PROSITE-ProRule" id="PRU00067"/>
    </source>
</evidence>
<evidence type="ECO:0000256" key="4">
    <source>
        <dbReference type="SAM" id="MobiDB-lite"/>
    </source>
</evidence>
<evidence type="ECO:0000269" key="5">
    <source>
    </source>
</evidence>
<evidence type="ECO:0000269" key="6">
    <source>
    </source>
</evidence>
<evidence type="ECO:0000269" key="7">
    <source>
    </source>
</evidence>
<evidence type="ECO:0000303" key="8">
    <source>
    </source>
</evidence>
<evidence type="ECO:0000303" key="9">
    <source>
    </source>
</evidence>
<evidence type="ECO:0000303" key="10">
    <source>
    </source>
</evidence>
<evidence type="ECO:0000305" key="11"/>
<evidence type="ECO:0000305" key="12">
    <source>
    </source>
</evidence>
<evidence type="ECO:0000305" key="13">
    <source>
    </source>
</evidence>
<evidence type="ECO:0000312" key="14">
    <source>
        <dbReference type="HGNC" id="HGNC:20713"/>
    </source>
</evidence>
<feature type="chain" id="PRO_0000212904" description="Palmitoyltransferase ZDHHC19">
    <location>
        <begin position="1"/>
        <end position="309"/>
    </location>
</feature>
<feature type="transmembrane region" description="Helical" evidence="2">
    <location>
        <begin position="29"/>
        <end position="49"/>
    </location>
</feature>
<feature type="transmembrane region" description="Helical" evidence="2">
    <location>
        <begin position="59"/>
        <end position="79"/>
    </location>
</feature>
<feature type="transmembrane region" description="Helical" evidence="2">
    <location>
        <begin position="160"/>
        <end position="180"/>
    </location>
</feature>
<feature type="transmembrane region" description="Helical" evidence="2">
    <location>
        <begin position="193"/>
        <end position="213"/>
    </location>
</feature>
<feature type="domain" description="DHHC" evidence="3">
    <location>
        <begin position="112"/>
        <end position="162"/>
    </location>
</feature>
<feature type="region of interest" description="Disordered" evidence="4">
    <location>
        <begin position="280"/>
        <end position="309"/>
    </location>
</feature>
<feature type="compositionally biased region" description="Pro residues" evidence="4">
    <location>
        <begin position="280"/>
        <end position="294"/>
    </location>
</feature>
<feature type="active site" description="S-palmitoyl cysteine intermediate" evidence="3 5 7">
    <location>
        <position position="142"/>
    </location>
</feature>
<feature type="splice variant" id="VSP_056001" description="In isoform 2." evidence="8">
    <location>
        <begin position="230"/>
        <end position="309"/>
    </location>
</feature>
<feature type="splice variant" id="VSP_060410" description="In isoform 3.">
    <original>YMAEAVQLQRVVGPDWTSMPNLHP</original>
    <variation>AAASWMRLASASCRAKPWAVCFPS</variation>
    <location>
        <begin position="259"/>
        <end position="282"/>
    </location>
</feature>
<feature type="splice variant" id="VSP_060411" description="In isoform 3.">
    <location>
        <begin position="283"/>
        <end position="309"/>
    </location>
</feature>
<feature type="sequence variant" id="VAR_052979" description="In dbSNP:rs13315830.">
    <original>G</original>
    <variation>A</variation>
    <location>
        <position position="66"/>
    </location>
</feature>
<feature type="mutagenesis site" description="Abolishes palmitoyltransferase activity." evidence="5 7">
    <original>C</original>
    <variation>S</variation>
    <location>
        <position position="142"/>
    </location>
</feature>
<protein>
    <recommendedName>
        <fullName evidence="11">Palmitoyltransferase ZDHHC19</fullName>
        <ecNumber evidence="5 7">2.3.1.225</ecNumber>
    </recommendedName>
    <alternativeName>
        <fullName evidence="9">Zinc finger DHHC domain-containing protein 19</fullName>
        <shortName evidence="9">DHHC-19</shortName>
    </alternativeName>
</protein>
<gene>
    <name evidence="10 14" type="primary">ZDHHC19</name>
</gene>
<proteinExistence type="evidence at protein level"/>
<organism>
    <name type="scientific">Homo sapiens</name>
    <name type="common">Human</name>
    <dbReference type="NCBI Taxonomy" id="9606"/>
    <lineage>
        <taxon>Eukaryota</taxon>
        <taxon>Metazoa</taxon>
        <taxon>Chordata</taxon>
        <taxon>Craniata</taxon>
        <taxon>Vertebrata</taxon>
        <taxon>Euteleostomi</taxon>
        <taxon>Mammalia</taxon>
        <taxon>Eutheria</taxon>
        <taxon>Euarchontoglires</taxon>
        <taxon>Primates</taxon>
        <taxon>Haplorrhini</taxon>
        <taxon>Catarrhini</taxon>
        <taxon>Hominidae</taxon>
        <taxon>Homo</taxon>
    </lineage>
</organism>
<reference key="1">
    <citation type="journal article" date="2004" name="Nat. Genet.">
        <title>Complete sequencing and characterization of 21,243 full-length human cDNAs.</title>
        <authorList>
            <person name="Ota T."/>
            <person name="Suzuki Y."/>
            <person name="Nishikawa T."/>
            <person name="Otsuki T."/>
            <person name="Sugiyama T."/>
            <person name="Irie R."/>
            <person name="Wakamatsu A."/>
            <person name="Hayashi K."/>
            <person name="Sato H."/>
            <person name="Nagai K."/>
            <person name="Kimura K."/>
            <person name="Makita H."/>
            <person name="Sekine M."/>
            <person name="Obayashi M."/>
            <person name="Nishi T."/>
            <person name="Shibahara T."/>
            <person name="Tanaka T."/>
            <person name="Ishii S."/>
            <person name="Yamamoto J."/>
            <person name="Saito K."/>
            <person name="Kawai Y."/>
            <person name="Isono Y."/>
            <person name="Nakamura Y."/>
            <person name="Nagahari K."/>
            <person name="Murakami K."/>
            <person name="Yasuda T."/>
            <person name="Iwayanagi T."/>
            <person name="Wagatsuma M."/>
            <person name="Shiratori A."/>
            <person name="Sudo H."/>
            <person name="Hosoiri T."/>
            <person name="Kaku Y."/>
            <person name="Kodaira H."/>
            <person name="Kondo H."/>
            <person name="Sugawara M."/>
            <person name="Takahashi M."/>
            <person name="Kanda K."/>
            <person name="Yokoi T."/>
            <person name="Furuya T."/>
            <person name="Kikkawa E."/>
            <person name="Omura Y."/>
            <person name="Abe K."/>
            <person name="Kamihara K."/>
            <person name="Katsuta N."/>
            <person name="Sato K."/>
            <person name="Tanikawa M."/>
            <person name="Yamazaki M."/>
            <person name="Ninomiya K."/>
            <person name="Ishibashi T."/>
            <person name="Yamashita H."/>
            <person name="Murakawa K."/>
            <person name="Fujimori K."/>
            <person name="Tanai H."/>
            <person name="Kimata M."/>
            <person name="Watanabe M."/>
            <person name="Hiraoka S."/>
            <person name="Chiba Y."/>
            <person name="Ishida S."/>
            <person name="Ono Y."/>
            <person name="Takiguchi S."/>
            <person name="Watanabe S."/>
            <person name="Yosida M."/>
            <person name="Hotuta T."/>
            <person name="Kusano J."/>
            <person name="Kanehori K."/>
            <person name="Takahashi-Fujii A."/>
            <person name="Hara H."/>
            <person name="Tanase T.-O."/>
            <person name="Nomura Y."/>
            <person name="Togiya S."/>
            <person name="Komai F."/>
            <person name="Hara R."/>
            <person name="Takeuchi K."/>
            <person name="Arita M."/>
            <person name="Imose N."/>
            <person name="Musashino K."/>
            <person name="Yuuki H."/>
            <person name="Oshima A."/>
            <person name="Sasaki N."/>
            <person name="Aotsuka S."/>
            <person name="Yoshikawa Y."/>
            <person name="Matsunawa H."/>
            <person name="Ichihara T."/>
            <person name="Shiohata N."/>
            <person name="Sano S."/>
            <person name="Moriya S."/>
            <person name="Momiyama H."/>
            <person name="Satoh N."/>
            <person name="Takami S."/>
            <person name="Terashima Y."/>
            <person name="Suzuki O."/>
            <person name="Nakagawa S."/>
            <person name="Senoh A."/>
            <person name="Mizoguchi H."/>
            <person name="Goto Y."/>
            <person name="Shimizu F."/>
            <person name="Wakebe H."/>
            <person name="Hishigaki H."/>
            <person name="Watanabe T."/>
            <person name="Sugiyama A."/>
            <person name="Takemoto M."/>
            <person name="Kawakami B."/>
            <person name="Yamazaki M."/>
            <person name="Watanabe K."/>
            <person name="Kumagai A."/>
            <person name="Itakura S."/>
            <person name="Fukuzumi Y."/>
            <person name="Fujimori Y."/>
            <person name="Komiyama M."/>
            <person name="Tashiro H."/>
            <person name="Tanigami A."/>
            <person name="Fujiwara T."/>
            <person name="Ono T."/>
            <person name="Yamada K."/>
            <person name="Fujii Y."/>
            <person name="Ozaki K."/>
            <person name="Hirao M."/>
            <person name="Ohmori Y."/>
            <person name="Kawabata A."/>
            <person name="Hikiji T."/>
            <person name="Kobatake N."/>
            <person name="Inagaki H."/>
            <person name="Ikema Y."/>
            <person name="Okamoto S."/>
            <person name="Okitani R."/>
            <person name="Kawakami T."/>
            <person name="Noguchi S."/>
            <person name="Itoh T."/>
            <person name="Shigeta K."/>
            <person name="Senba T."/>
            <person name="Matsumura K."/>
            <person name="Nakajima Y."/>
            <person name="Mizuno T."/>
            <person name="Morinaga M."/>
            <person name="Sasaki M."/>
            <person name="Togashi T."/>
            <person name="Oyama M."/>
            <person name="Hata H."/>
            <person name="Watanabe M."/>
            <person name="Komatsu T."/>
            <person name="Mizushima-Sugano J."/>
            <person name="Satoh T."/>
            <person name="Shirai Y."/>
            <person name="Takahashi Y."/>
            <person name="Nakagawa K."/>
            <person name="Okumura K."/>
            <person name="Nagase T."/>
            <person name="Nomura N."/>
            <person name="Kikuchi H."/>
            <person name="Masuho Y."/>
            <person name="Yamashita R."/>
            <person name="Nakai K."/>
            <person name="Yada T."/>
            <person name="Nakamura Y."/>
            <person name="Ohara O."/>
            <person name="Isogai T."/>
            <person name="Sugano S."/>
        </authorList>
    </citation>
    <scope>NUCLEOTIDE SEQUENCE [LARGE SCALE MRNA] (ISOFORM 2)</scope>
    <source>
        <tissue>Testis</tissue>
    </source>
</reference>
<reference key="2">
    <citation type="journal article" date="2006" name="Nature">
        <title>The DNA sequence, annotation and analysis of human chromosome 3.</title>
        <authorList>
            <person name="Muzny D.M."/>
            <person name="Scherer S.E."/>
            <person name="Kaul R."/>
            <person name="Wang J."/>
            <person name="Yu J."/>
            <person name="Sudbrak R."/>
            <person name="Buhay C.J."/>
            <person name="Chen R."/>
            <person name="Cree A."/>
            <person name="Ding Y."/>
            <person name="Dugan-Rocha S."/>
            <person name="Gill R."/>
            <person name="Gunaratne P."/>
            <person name="Harris R.A."/>
            <person name="Hawes A.C."/>
            <person name="Hernandez J."/>
            <person name="Hodgson A.V."/>
            <person name="Hume J."/>
            <person name="Jackson A."/>
            <person name="Khan Z.M."/>
            <person name="Kovar-Smith C."/>
            <person name="Lewis L.R."/>
            <person name="Lozado R.J."/>
            <person name="Metzker M.L."/>
            <person name="Milosavljevic A."/>
            <person name="Miner G.R."/>
            <person name="Morgan M.B."/>
            <person name="Nazareth L.V."/>
            <person name="Scott G."/>
            <person name="Sodergren E."/>
            <person name="Song X.-Z."/>
            <person name="Steffen D."/>
            <person name="Wei S."/>
            <person name="Wheeler D.A."/>
            <person name="Wright M.W."/>
            <person name="Worley K.C."/>
            <person name="Yuan Y."/>
            <person name="Zhang Z."/>
            <person name="Adams C.Q."/>
            <person name="Ansari-Lari M.A."/>
            <person name="Ayele M."/>
            <person name="Brown M.J."/>
            <person name="Chen G."/>
            <person name="Chen Z."/>
            <person name="Clendenning J."/>
            <person name="Clerc-Blankenburg K.P."/>
            <person name="Chen R."/>
            <person name="Chen Z."/>
            <person name="Davis C."/>
            <person name="Delgado O."/>
            <person name="Dinh H.H."/>
            <person name="Dong W."/>
            <person name="Draper H."/>
            <person name="Ernst S."/>
            <person name="Fu G."/>
            <person name="Gonzalez-Garay M.L."/>
            <person name="Garcia D.K."/>
            <person name="Gillett W."/>
            <person name="Gu J."/>
            <person name="Hao B."/>
            <person name="Haugen E."/>
            <person name="Havlak P."/>
            <person name="He X."/>
            <person name="Hennig S."/>
            <person name="Hu S."/>
            <person name="Huang W."/>
            <person name="Jackson L.R."/>
            <person name="Jacob L.S."/>
            <person name="Kelly S.H."/>
            <person name="Kube M."/>
            <person name="Levy R."/>
            <person name="Li Z."/>
            <person name="Liu B."/>
            <person name="Liu J."/>
            <person name="Liu W."/>
            <person name="Lu J."/>
            <person name="Maheshwari M."/>
            <person name="Nguyen B.-V."/>
            <person name="Okwuonu G.O."/>
            <person name="Palmeiri A."/>
            <person name="Pasternak S."/>
            <person name="Perez L.M."/>
            <person name="Phelps K.A."/>
            <person name="Plopper F.J."/>
            <person name="Qiang B."/>
            <person name="Raymond C."/>
            <person name="Rodriguez R."/>
            <person name="Saenphimmachak C."/>
            <person name="Santibanez J."/>
            <person name="Shen H."/>
            <person name="Shen Y."/>
            <person name="Subramanian S."/>
            <person name="Tabor P.E."/>
            <person name="Verduzco D."/>
            <person name="Waldron L."/>
            <person name="Wang J."/>
            <person name="Wang J."/>
            <person name="Wang Q."/>
            <person name="Williams G.A."/>
            <person name="Wong G.K.-S."/>
            <person name="Yao Z."/>
            <person name="Zhang J."/>
            <person name="Zhang X."/>
            <person name="Zhao G."/>
            <person name="Zhou J."/>
            <person name="Zhou Y."/>
            <person name="Nelson D."/>
            <person name="Lehrach H."/>
            <person name="Reinhardt R."/>
            <person name="Naylor S.L."/>
            <person name="Yang H."/>
            <person name="Olson M."/>
            <person name="Weinstock G."/>
            <person name="Gibbs R.A."/>
        </authorList>
    </citation>
    <scope>NUCLEOTIDE SEQUENCE [LARGE SCALE GENOMIC DNA]</scope>
</reference>
<reference key="3">
    <citation type="submission" date="2005-09" db="EMBL/GenBank/DDBJ databases">
        <authorList>
            <person name="Mural R.J."/>
            <person name="Istrail S."/>
            <person name="Sutton G."/>
            <person name="Florea L."/>
            <person name="Halpern A.L."/>
            <person name="Mobarry C.M."/>
            <person name="Lippert R."/>
            <person name="Walenz B."/>
            <person name="Shatkay H."/>
            <person name="Dew I."/>
            <person name="Miller J.R."/>
            <person name="Flanigan M.J."/>
            <person name="Edwards N.J."/>
            <person name="Bolanos R."/>
            <person name="Fasulo D."/>
            <person name="Halldorsson B.V."/>
            <person name="Hannenhalli S."/>
            <person name="Turner R."/>
            <person name="Yooseph S."/>
            <person name="Lu F."/>
            <person name="Nusskern D.R."/>
            <person name="Shue B.C."/>
            <person name="Zheng X.H."/>
            <person name="Zhong F."/>
            <person name="Delcher A.L."/>
            <person name="Huson D.H."/>
            <person name="Kravitz S.A."/>
            <person name="Mouchard L."/>
            <person name="Reinert K."/>
            <person name="Remington K.A."/>
            <person name="Clark A.G."/>
            <person name="Waterman M.S."/>
            <person name="Eichler E.E."/>
            <person name="Adams M.D."/>
            <person name="Hunkapiller M.W."/>
            <person name="Myers E.W."/>
            <person name="Venter J.C."/>
        </authorList>
    </citation>
    <scope>NUCLEOTIDE SEQUENCE [LARGE SCALE GENOMIC DNA]</scope>
</reference>
<reference key="4">
    <citation type="journal article" date="2010" name="Biochim. Biophys. Acta">
        <title>Palmitoylation of R-Ras by human DHHC19, a palmitoyl transferase with a CaaX box.</title>
        <authorList>
            <person name="Baumgart F."/>
            <person name="Corral-Escariz M."/>
            <person name="Perez-Gil J."/>
            <person name="Rodriguez-Crespo I."/>
        </authorList>
    </citation>
    <scope>FUNCTION</scope>
    <scope>ACTIVE SITE</scope>
    <scope>SUBCELLULAR LOCATION</scope>
    <scope>MUTAGENESIS OF CYS-142</scope>
</reference>
<reference key="5">
    <citation type="journal article" date="2018" name="J. Virol.">
        <title>Fatty acid synthase promotes the palmitoylation of Chikungunya virus nsP1.</title>
        <authorList>
            <person name="Zhang N."/>
            <person name="Zhao H."/>
            <person name="Zhang L."/>
        </authorList>
    </citation>
    <scope>FUNCTION (MICROBIAL INFECTION)</scope>
</reference>
<reference key="6">
    <citation type="journal article" date="2019" name="Nature">
        <title>Fatty acids and cancer-amplified ZDHHC19 promote STAT3 activation through S-palmitoylation.</title>
        <authorList>
            <person name="Niu J."/>
            <person name="Sun Y."/>
            <person name="Chen B."/>
            <person name="Zheng B."/>
            <person name="Jarugumilli G.K."/>
            <person name="Walker S.R."/>
            <person name="Hata A.N."/>
            <person name="Mino-Kenudson M."/>
            <person name="Frank D.A."/>
            <person name="Wu X."/>
        </authorList>
    </citation>
    <scope>RETRACTED PAPER</scope>
</reference>
<reference key="7">
    <citation type="journal article" date="2020" name="Nature">
        <authorList>
            <person name="Niu J."/>
            <person name="Sun Y."/>
            <person name="Chen B."/>
            <person name="Zheng B."/>
            <person name="Jarugumilli G.K."/>
            <person name="Walker S.R."/>
            <person name="Hata A.N."/>
            <person name="Mino-Kenudson M."/>
            <person name="Frank D.A."/>
            <person name="Wu X."/>
        </authorList>
    </citation>
    <scope>RETRACTION NOTICE OF PUBMED:31462771</scope>
</reference>
<reference key="8">
    <citation type="journal article" date="2023" name="Mol. Cell">
        <title>S-acylation of p62 promotes p62 droplet recruitment into autophagosomes in mammalian autophagy.</title>
        <authorList>
            <person name="Huang X."/>
            <person name="Yao J."/>
            <person name="Liu L."/>
            <person name="Chen J."/>
            <person name="Mei L."/>
            <person name="Huangfu J."/>
            <person name="Luo D."/>
            <person name="Wang X."/>
            <person name="Lin C."/>
            <person name="Chen X."/>
            <person name="Yang Y."/>
            <person name="Ouyang S."/>
            <person name="Wei F."/>
            <person name="Wang Z."/>
            <person name="Zhang S."/>
            <person name="Xiang T."/>
            <person name="Neculai D."/>
            <person name="Sun Q."/>
            <person name="Kong E."/>
            <person name="Tate E.W."/>
            <person name="Yang A."/>
        </authorList>
    </citation>
    <scope>FUNCTION</scope>
    <scope>CATALYTIC ACTIVITY</scope>
    <scope>ACTIVE SITE</scope>
    <scope>MUTAGENESIS OF CYS-142</scope>
</reference>